<proteinExistence type="inferred from homology"/>
<gene>
    <name type="ORF">ORF VI</name>
</gene>
<accession>P05401</accession>
<organismHost>
    <name type="scientific">Dianthus caryophyllus</name>
    <name type="common">Carnation</name>
    <name type="synonym">Clove pink</name>
    <dbReference type="NCBI Taxonomy" id="3570"/>
</organismHost>
<sequence length="496" mass="56422">MERHEQILKEIAFLELRLQSLKLELEFVRSSGSEQKGKIEPFRPNSECSATPMQTAIGKESSNPLMAISLPKAEKKHSKASEVPSPHKTVKEFSEIPKDFLRPNQGIQIPKKNEDHSSSSSKEEKGIQNPKKDFYVVYNGPYAGIYDHWGTAKKATNKIPGVSYKKFKDMLSARTSADIYTNAQFGEKLKYIPGATTSPKSFAEALTTRPSNMKSLGKPKFIKIEEDDDVGFNPEFDLKSFLYIYKYGRNLEEEHFLTDRAFTIDKKEISYLNFVNNSDPEGILESFKAGLVRFIYPSTNLQELRLLPKVLKSSVQRFRKKCIKDSEKEIFLKIKSTIPCWEDYYNGLDDSVSYRPNYLVQIGISKGVNYQPSQKMEAVVLKEQWQGIAEEKAIEFFQAIEDILSNEKIFIIYCDDRILIYSSSPKERTKEDLMAILNFQSEVSSCKLLGFHSDKICSYLNKKASVGKPYSCPQKGKAVITSGPSFSVEDTLSDTE</sequence>
<comment type="function">
    <text>Enhances the translation of downstream ORFs on polycistronic mRNAs derived from carnation etched ring virus.</text>
</comment>
<comment type="subcellular location">
    <subcellularLocation>
        <location>Host cytoplasm</location>
    </subcellularLocation>
    <text>Found in cytoplasmic occlusion bodies.</text>
</comment>
<comment type="miscellaneous">
    <text>The inclusion bodies are the site of viral DNA synthesis, virion assembly and accumulation in the infected cell.</text>
</comment>
<comment type="similarity">
    <text evidence="2">Belongs to the caulimoviridae viroplasmin family.</text>
</comment>
<protein>
    <recommendedName>
        <fullName>Transactivator/viroplasmin protein</fullName>
        <shortName>Tav</shortName>
    </recommendedName>
    <alternativeName>
        <fullName>Inclusion body matrix protein</fullName>
    </alternativeName>
</protein>
<reference key="1">
    <citation type="journal article" date="1986" name="EMBO J.">
        <title>The sequence of carnation etched ring virus DNA: comparison with cauliflower mosaic virus and retroviruses.</title>
        <authorList>
            <person name="Hull R."/>
            <person name="Sadler J."/>
            <person name="Longstaff M."/>
        </authorList>
    </citation>
    <scope>NUCLEOTIDE SEQUENCE [GENOMIC DNA]</scope>
</reference>
<name>IBMP_CERV</name>
<dbReference type="EMBL" id="X04658">
    <property type="protein sequence ID" value="CAA28361.1"/>
    <property type="molecule type" value="Genomic_DNA"/>
</dbReference>
<dbReference type="PIR" id="S00855">
    <property type="entry name" value="S00855"/>
</dbReference>
<dbReference type="RefSeq" id="NP_612578.1">
    <property type="nucleotide sequence ID" value="NC_003498.1"/>
</dbReference>
<dbReference type="SMR" id="P05401"/>
<dbReference type="KEGG" id="vg:935426"/>
<dbReference type="OrthoDB" id="12709at10239"/>
<dbReference type="Proteomes" id="UP000008446">
    <property type="component" value="Segment"/>
</dbReference>
<dbReference type="GO" id="GO:0030430">
    <property type="term" value="C:host cell cytoplasm"/>
    <property type="evidence" value="ECO:0007669"/>
    <property type="project" value="UniProtKB-SubCell"/>
</dbReference>
<dbReference type="GO" id="GO:0006417">
    <property type="term" value="P:regulation of translation"/>
    <property type="evidence" value="ECO:0007669"/>
    <property type="project" value="UniProtKB-KW"/>
</dbReference>
<dbReference type="Gene3D" id="3.40.970.10">
    <property type="entry name" value="Ribonuclease H1, N-terminal domain"/>
    <property type="match status" value="1"/>
</dbReference>
<dbReference type="InterPro" id="IPR009027">
    <property type="entry name" value="Ribosomal_bL9/RNase_H1_N"/>
</dbReference>
<dbReference type="InterPro" id="IPR011320">
    <property type="entry name" value="RNase_H1_N"/>
</dbReference>
<dbReference type="InterPro" id="IPR037056">
    <property type="entry name" value="RNase_H1_N_sf"/>
</dbReference>
<dbReference type="Pfam" id="PF01693">
    <property type="entry name" value="Cauli_VI"/>
    <property type="match status" value="1"/>
</dbReference>
<dbReference type="SUPFAM" id="SSF55658">
    <property type="entry name" value="L9 N-domain-like"/>
    <property type="match status" value="1"/>
</dbReference>
<evidence type="ECO:0000256" key="1">
    <source>
        <dbReference type="SAM" id="MobiDB-lite"/>
    </source>
</evidence>
<evidence type="ECO:0000305" key="2"/>
<organism>
    <name type="scientific">Carnation etched ring virus</name>
    <name type="common">CERV</name>
    <dbReference type="NCBI Taxonomy" id="10640"/>
    <lineage>
        <taxon>Viruses</taxon>
        <taxon>Riboviria</taxon>
        <taxon>Pararnavirae</taxon>
        <taxon>Artverviricota</taxon>
        <taxon>Revtraviricetes</taxon>
        <taxon>Ortervirales</taxon>
        <taxon>Caulimoviridae</taxon>
        <taxon>Caulimovirus</taxon>
        <taxon>Caulimovirus incidianthi</taxon>
    </lineage>
</organism>
<keyword id="KW-1035">Host cytoplasm</keyword>
<keyword id="KW-1185">Reference proteome</keyword>
<keyword id="KW-0810">Translation regulation</keyword>
<feature type="chain" id="PRO_0000222047" description="Transactivator/viroplasmin protein">
    <location>
        <begin position="1"/>
        <end position="496"/>
    </location>
</feature>
<feature type="region of interest" description="Disordered" evidence="1">
    <location>
        <begin position="102"/>
        <end position="128"/>
    </location>
</feature>
<feature type="compositionally biased region" description="Basic and acidic residues" evidence="1">
    <location>
        <begin position="111"/>
        <end position="128"/>
    </location>
</feature>